<name>RECO_THIDA</name>
<comment type="function">
    <text evidence="1">Involved in DNA repair and RecF pathway recombination.</text>
</comment>
<comment type="similarity">
    <text evidence="1">Belongs to the RecO family.</text>
</comment>
<organism>
    <name type="scientific">Thiobacillus denitrificans (strain ATCC 25259 / T1)</name>
    <dbReference type="NCBI Taxonomy" id="292415"/>
    <lineage>
        <taxon>Bacteria</taxon>
        <taxon>Pseudomonadati</taxon>
        <taxon>Pseudomonadota</taxon>
        <taxon>Betaproteobacteria</taxon>
        <taxon>Nitrosomonadales</taxon>
        <taxon>Thiobacillaceae</taxon>
        <taxon>Thiobacillus</taxon>
    </lineage>
</organism>
<keyword id="KW-0227">DNA damage</keyword>
<keyword id="KW-0233">DNA recombination</keyword>
<keyword id="KW-0234">DNA repair</keyword>
<keyword id="KW-1185">Reference proteome</keyword>
<dbReference type="EMBL" id="CP000116">
    <property type="protein sequence ID" value="AAZ98037.1"/>
    <property type="molecule type" value="Genomic_DNA"/>
</dbReference>
<dbReference type="SMR" id="Q3SH52"/>
<dbReference type="STRING" id="292415.Tbd_2084"/>
<dbReference type="KEGG" id="tbd:Tbd_2084"/>
<dbReference type="eggNOG" id="COG1381">
    <property type="taxonomic scope" value="Bacteria"/>
</dbReference>
<dbReference type="HOGENOM" id="CLU_066645_1_0_4"/>
<dbReference type="OrthoDB" id="9804792at2"/>
<dbReference type="Proteomes" id="UP000008291">
    <property type="component" value="Chromosome"/>
</dbReference>
<dbReference type="GO" id="GO:0043590">
    <property type="term" value="C:bacterial nucleoid"/>
    <property type="evidence" value="ECO:0007669"/>
    <property type="project" value="TreeGrafter"/>
</dbReference>
<dbReference type="GO" id="GO:0006310">
    <property type="term" value="P:DNA recombination"/>
    <property type="evidence" value="ECO:0007669"/>
    <property type="project" value="UniProtKB-UniRule"/>
</dbReference>
<dbReference type="GO" id="GO:0006302">
    <property type="term" value="P:double-strand break repair"/>
    <property type="evidence" value="ECO:0007669"/>
    <property type="project" value="TreeGrafter"/>
</dbReference>
<dbReference type="Gene3D" id="2.40.50.140">
    <property type="entry name" value="Nucleic acid-binding proteins"/>
    <property type="match status" value="1"/>
</dbReference>
<dbReference type="Gene3D" id="1.20.1440.120">
    <property type="entry name" value="Recombination protein O, C-terminal domain"/>
    <property type="match status" value="1"/>
</dbReference>
<dbReference type="HAMAP" id="MF_00201">
    <property type="entry name" value="RecO"/>
    <property type="match status" value="1"/>
</dbReference>
<dbReference type="InterPro" id="IPR037278">
    <property type="entry name" value="ARFGAP/RecO"/>
</dbReference>
<dbReference type="InterPro" id="IPR022572">
    <property type="entry name" value="DNA_rep/recomb_RecO_N"/>
</dbReference>
<dbReference type="InterPro" id="IPR012340">
    <property type="entry name" value="NA-bd_OB-fold"/>
</dbReference>
<dbReference type="InterPro" id="IPR003717">
    <property type="entry name" value="RecO"/>
</dbReference>
<dbReference type="InterPro" id="IPR042242">
    <property type="entry name" value="RecO_C"/>
</dbReference>
<dbReference type="NCBIfam" id="TIGR00613">
    <property type="entry name" value="reco"/>
    <property type="match status" value="1"/>
</dbReference>
<dbReference type="PANTHER" id="PTHR33991">
    <property type="entry name" value="DNA REPAIR PROTEIN RECO"/>
    <property type="match status" value="1"/>
</dbReference>
<dbReference type="PANTHER" id="PTHR33991:SF1">
    <property type="entry name" value="DNA REPAIR PROTEIN RECO"/>
    <property type="match status" value="1"/>
</dbReference>
<dbReference type="Pfam" id="PF02565">
    <property type="entry name" value="RecO_C"/>
    <property type="match status" value="1"/>
</dbReference>
<dbReference type="Pfam" id="PF11967">
    <property type="entry name" value="RecO_N"/>
    <property type="match status" value="1"/>
</dbReference>
<dbReference type="SUPFAM" id="SSF57863">
    <property type="entry name" value="ArfGap/RecO-like zinc finger"/>
    <property type="match status" value="1"/>
</dbReference>
<dbReference type="SUPFAM" id="SSF50249">
    <property type="entry name" value="Nucleic acid-binding proteins"/>
    <property type="match status" value="1"/>
</dbReference>
<sequence>MPASRSLGMSSDARVNNESGFILHTYPFKETSVVAEVFTRAHGRVALIARGARRPASALRGLMQPFSPLLLSWFGKADLKTLHAAEWQGGLVAPQGRALMCGFYLNELLLRLLARGDAHERLYDRYVETLDQLARSAAASDAERATAFERILRRFEKNLLSEIGYGATFDVEAGGAAIEPGAAYVFQPERGALRAAGQPGCPVSGQTLLDLAGDSFERLATLGEAKALMRALINHTLGTKPLYTRQLLRELTELNP</sequence>
<reference key="1">
    <citation type="journal article" date="2006" name="J. Bacteriol.">
        <title>The genome sequence of the obligately chemolithoautotrophic, facultatively anaerobic bacterium Thiobacillus denitrificans.</title>
        <authorList>
            <person name="Beller H.R."/>
            <person name="Chain P.S."/>
            <person name="Letain T.E."/>
            <person name="Chakicherla A."/>
            <person name="Larimer F.W."/>
            <person name="Richardson P.M."/>
            <person name="Coleman M.A."/>
            <person name="Wood A.P."/>
            <person name="Kelly D.P."/>
        </authorList>
    </citation>
    <scope>NUCLEOTIDE SEQUENCE [LARGE SCALE GENOMIC DNA]</scope>
    <source>
        <strain>ATCC 25259 / T1</strain>
    </source>
</reference>
<protein>
    <recommendedName>
        <fullName evidence="1">DNA repair protein RecO</fullName>
    </recommendedName>
    <alternativeName>
        <fullName evidence="1">Recombination protein O</fullName>
    </alternativeName>
</protein>
<proteinExistence type="inferred from homology"/>
<accession>Q3SH52</accession>
<feature type="chain" id="PRO_0000227060" description="DNA repair protein RecO">
    <location>
        <begin position="1"/>
        <end position="256"/>
    </location>
</feature>
<evidence type="ECO:0000255" key="1">
    <source>
        <dbReference type="HAMAP-Rule" id="MF_00201"/>
    </source>
</evidence>
<gene>
    <name evidence="1" type="primary">recO</name>
    <name type="ordered locus">Tbd_2084</name>
</gene>